<protein>
    <recommendedName>
        <fullName evidence="1">Ribosomal RNA small subunit methyltransferase H</fullName>
        <ecNumber evidence="1">2.1.1.199</ecNumber>
    </recommendedName>
    <alternativeName>
        <fullName evidence="1">16S rRNA m(4)C1402 methyltransferase</fullName>
    </alternativeName>
    <alternativeName>
        <fullName evidence="1">rRNA (cytosine-N(4)-)-methyltransferase RsmH</fullName>
    </alternativeName>
</protein>
<organism>
    <name type="scientific">Ruegeria sp. (strain TM1040)</name>
    <name type="common">Silicibacter sp.</name>
    <dbReference type="NCBI Taxonomy" id="292414"/>
    <lineage>
        <taxon>Bacteria</taxon>
        <taxon>Pseudomonadati</taxon>
        <taxon>Pseudomonadota</taxon>
        <taxon>Alphaproteobacteria</taxon>
        <taxon>Rhodobacterales</taxon>
        <taxon>Roseobacteraceae</taxon>
        <taxon>Ruegeria</taxon>
    </lineage>
</organism>
<gene>
    <name evidence="1" type="primary">rsmH</name>
    <name type="synonym">mraW</name>
    <name type="ordered locus">TM1040_2015</name>
</gene>
<accession>Q1GF19</accession>
<feature type="chain" id="PRO_0000318879" description="Ribosomal RNA small subunit methyltransferase H">
    <location>
        <begin position="1"/>
        <end position="329"/>
    </location>
</feature>
<feature type="region of interest" description="Disordered" evidence="2">
    <location>
        <begin position="285"/>
        <end position="305"/>
    </location>
</feature>
<feature type="binding site" evidence="1">
    <location>
        <begin position="39"/>
        <end position="41"/>
    </location>
    <ligand>
        <name>S-adenosyl-L-methionine</name>
        <dbReference type="ChEBI" id="CHEBI:59789"/>
    </ligand>
</feature>
<feature type="binding site" evidence="1">
    <location>
        <position position="57"/>
    </location>
    <ligand>
        <name>S-adenosyl-L-methionine</name>
        <dbReference type="ChEBI" id="CHEBI:59789"/>
    </ligand>
</feature>
<feature type="binding site" evidence="1">
    <location>
        <position position="84"/>
    </location>
    <ligand>
        <name>S-adenosyl-L-methionine</name>
        <dbReference type="ChEBI" id="CHEBI:59789"/>
    </ligand>
</feature>
<feature type="binding site" evidence="1">
    <location>
        <position position="100"/>
    </location>
    <ligand>
        <name>S-adenosyl-L-methionine</name>
        <dbReference type="ChEBI" id="CHEBI:59789"/>
    </ligand>
</feature>
<feature type="binding site" evidence="1">
    <location>
        <position position="107"/>
    </location>
    <ligand>
        <name>S-adenosyl-L-methionine</name>
        <dbReference type="ChEBI" id="CHEBI:59789"/>
    </ligand>
</feature>
<sequence>MTDRTAAPSGPHIPVLLKPLLAAVAPVTGRWLDGTFGAGGYTKGLLAAGADQVIGVDRDPLAFEMAQPWAAEYGDRLVLQQGVFSRMDEYAQELDGVVLDLGVSSMQLDLAERGFSFMKEGPLDMRMSQDGPSAADLVAELSEVQLADVLYSFGEERASRRIAKAIVKERAQEPITTTLRLAEIIEGCLPRPKPGQSHPATRSFQALRIAVNGEYEELMGGLLAAERALKPGGLLAVVTFHSVEDRMVKRFFQHRANKTGNANRYAPAMEEQPSQFELVTRKAVGPDKDELAQNPRSRSALLRVGRRTDAAPVEITAKELSMPQLKETR</sequence>
<comment type="function">
    <text evidence="1">Specifically methylates the N4 position of cytidine in position 1402 (C1402) of 16S rRNA.</text>
</comment>
<comment type="catalytic activity">
    <reaction evidence="1">
        <text>cytidine(1402) in 16S rRNA + S-adenosyl-L-methionine = N(4)-methylcytidine(1402) in 16S rRNA + S-adenosyl-L-homocysteine + H(+)</text>
        <dbReference type="Rhea" id="RHEA:42928"/>
        <dbReference type="Rhea" id="RHEA-COMP:10286"/>
        <dbReference type="Rhea" id="RHEA-COMP:10287"/>
        <dbReference type="ChEBI" id="CHEBI:15378"/>
        <dbReference type="ChEBI" id="CHEBI:57856"/>
        <dbReference type="ChEBI" id="CHEBI:59789"/>
        <dbReference type="ChEBI" id="CHEBI:74506"/>
        <dbReference type="ChEBI" id="CHEBI:82748"/>
        <dbReference type="EC" id="2.1.1.199"/>
    </reaction>
</comment>
<comment type="subcellular location">
    <subcellularLocation>
        <location evidence="1">Cytoplasm</location>
    </subcellularLocation>
</comment>
<comment type="similarity">
    <text evidence="1">Belongs to the methyltransferase superfamily. RsmH family.</text>
</comment>
<name>RSMH_RUEST</name>
<proteinExistence type="inferred from homology"/>
<dbReference type="EC" id="2.1.1.199" evidence="1"/>
<dbReference type="EMBL" id="CP000377">
    <property type="protein sequence ID" value="ABF64747.1"/>
    <property type="molecule type" value="Genomic_DNA"/>
</dbReference>
<dbReference type="RefSeq" id="WP_011539340.1">
    <property type="nucleotide sequence ID" value="NC_008044.1"/>
</dbReference>
<dbReference type="SMR" id="Q1GF19"/>
<dbReference type="STRING" id="292414.TM1040_2015"/>
<dbReference type="KEGG" id="sit:TM1040_2015"/>
<dbReference type="eggNOG" id="COG0275">
    <property type="taxonomic scope" value="Bacteria"/>
</dbReference>
<dbReference type="HOGENOM" id="CLU_038422_1_1_5"/>
<dbReference type="OrthoDB" id="9806637at2"/>
<dbReference type="Proteomes" id="UP000000636">
    <property type="component" value="Chromosome"/>
</dbReference>
<dbReference type="GO" id="GO:0005737">
    <property type="term" value="C:cytoplasm"/>
    <property type="evidence" value="ECO:0007669"/>
    <property type="project" value="UniProtKB-SubCell"/>
</dbReference>
<dbReference type="GO" id="GO:0071424">
    <property type="term" value="F:rRNA (cytosine-N4-)-methyltransferase activity"/>
    <property type="evidence" value="ECO:0007669"/>
    <property type="project" value="UniProtKB-UniRule"/>
</dbReference>
<dbReference type="GO" id="GO:0070475">
    <property type="term" value="P:rRNA base methylation"/>
    <property type="evidence" value="ECO:0007669"/>
    <property type="project" value="UniProtKB-UniRule"/>
</dbReference>
<dbReference type="CDD" id="cd02440">
    <property type="entry name" value="AdoMet_MTases"/>
    <property type="match status" value="1"/>
</dbReference>
<dbReference type="Gene3D" id="1.10.150.170">
    <property type="entry name" value="Putative methyltransferase TM0872, insert domain"/>
    <property type="match status" value="1"/>
</dbReference>
<dbReference type="Gene3D" id="3.40.50.150">
    <property type="entry name" value="Vaccinia Virus protein VP39"/>
    <property type="match status" value="1"/>
</dbReference>
<dbReference type="HAMAP" id="MF_01007">
    <property type="entry name" value="16SrRNA_methyltr_H"/>
    <property type="match status" value="1"/>
</dbReference>
<dbReference type="InterPro" id="IPR002903">
    <property type="entry name" value="RsmH"/>
</dbReference>
<dbReference type="InterPro" id="IPR023397">
    <property type="entry name" value="SAM-dep_MeTrfase_MraW_recog"/>
</dbReference>
<dbReference type="InterPro" id="IPR029063">
    <property type="entry name" value="SAM-dependent_MTases_sf"/>
</dbReference>
<dbReference type="NCBIfam" id="TIGR00006">
    <property type="entry name" value="16S rRNA (cytosine(1402)-N(4))-methyltransferase RsmH"/>
    <property type="match status" value="1"/>
</dbReference>
<dbReference type="PANTHER" id="PTHR11265:SF0">
    <property type="entry name" value="12S RRNA N4-METHYLCYTIDINE METHYLTRANSFERASE"/>
    <property type="match status" value="1"/>
</dbReference>
<dbReference type="PANTHER" id="PTHR11265">
    <property type="entry name" value="S-ADENOSYL-METHYLTRANSFERASE MRAW"/>
    <property type="match status" value="1"/>
</dbReference>
<dbReference type="Pfam" id="PF01795">
    <property type="entry name" value="Methyltransf_5"/>
    <property type="match status" value="1"/>
</dbReference>
<dbReference type="PIRSF" id="PIRSF004486">
    <property type="entry name" value="MraW"/>
    <property type="match status" value="1"/>
</dbReference>
<dbReference type="SUPFAM" id="SSF81799">
    <property type="entry name" value="Putative methyltransferase TM0872, insert domain"/>
    <property type="match status" value="1"/>
</dbReference>
<dbReference type="SUPFAM" id="SSF53335">
    <property type="entry name" value="S-adenosyl-L-methionine-dependent methyltransferases"/>
    <property type="match status" value="1"/>
</dbReference>
<keyword id="KW-0963">Cytoplasm</keyword>
<keyword id="KW-0489">Methyltransferase</keyword>
<keyword id="KW-1185">Reference proteome</keyword>
<keyword id="KW-0698">rRNA processing</keyword>
<keyword id="KW-0949">S-adenosyl-L-methionine</keyword>
<keyword id="KW-0808">Transferase</keyword>
<evidence type="ECO:0000255" key="1">
    <source>
        <dbReference type="HAMAP-Rule" id="MF_01007"/>
    </source>
</evidence>
<evidence type="ECO:0000256" key="2">
    <source>
        <dbReference type="SAM" id="MobiDB-lite"/>
    </source>
</evidence>
<reference key="1">
    <citation type="submission" date="2006-05" db="EMBL/GenBank/DDBJ databases">
        <title>Complete sequence of chromosome of Silicibacter sp. TM1040.</title>
        <authorList>
            <consortium name="US DOE Joint Genome Institute"/>
            <person name="Copeland A."/>
            <person name="Lucas S."/>
            <person name="Lapidus A."/>
            <person name="Barry K."/>
            <person name="Detter J.C."/>
            <person name="Glavina del Rio T."/>
            <person name="Hammon N."/>
            <person name="Israni S."/>
            <person name="Dalin E."/>
            <person name="Tice H."/>
            <person name="Pitluck S."/>
            <person name="Brettin T."/>
            <person name="Bruce D."/>
            <person name="Han C."/>
            <person name="Tapia R."/>
            <person name="Goodwin L."/>
            <person name="Thompson L.S."/>
            <person name="Gilna P."/>
            <person name="Schmutz J."/>
            <person name="Larimer F."/>
            <person name="Land M."/>
            <person name="Hauser L."/>
            <person name="Kyrpides N."/>
            <person name="Kim E."/>
            <person name="Belas R."/>
            <person name="Moran M.A."/>
            <person name="Buchan A."/>
            <person name="Gonzalez J.M."/>
            <person name="Schell M.A."/>
            <person name="Sun F."/>
            <person name="Richardson P."/>
        </authorList>
    </citation>
    <scope>NUCLEOTIDE SEQUENCE [LARGE SCALE GENOMIC DNA]</scope>
    <source>
        <strain>TM1040</strain>
    </source>
</reference>